<dbReference type="EC" id="1.7.1.13" evidence="1"/>
<dbReference type="EMBL" id="CP000024">
    <property type="protein sequence ID" value="AAV62419.1"/>
    <property type="status" value="ALT_INIT"/>
    <property type="molecule type" value="Genomic_DNA"/>
</dbReference>
<dbReference type="RefSeq" id="WP_002946191.1">
    <property type="nucleotide sequence ID" value="NC_006449.1"/>
</dbReference>
<dbReference type="SMR" id="Q5M061"/>
<dbReference type="GeneID" id="66898714"/>
<dbReference type="KEGG" id="stc:str0828"/>
<dbReference type="HOGENOM" id="CLU_102489_0_1_9"/>
<dbReference type="UniPathway" id="UPA00392"/>
<dbReference type="GO" id="GO:0005737">
    <property type="term" value="C:cytoplasm"/>
    <property type="evidence" value="ECO:0007669"/>
    <property type="project" value="UniProtKB-SubCell"/>
</dbReference>
<dbReference type="GO" id="GO:0033739">
    <property type="term" value="F:preQ1 synthase activity"/>
    <property type="evidence" value="ECO:0007669"/>
    <property type="project" value="UniProtKB-UniRule"/>
</dbReference>
<dbReference type="GO" id="GO:0008616">
    <property type="term" value="P:queuosine biosynthetic process"/>
    <property type="evidence" value="ECO:0007669"/>
    <property type="project" value="UniProtKB-UniRule"/>
</dbReference>
<dbReference type="GO" id="GO:0006400">
    <property type="term" value="P:tRNA modification"/>
    <property type="evidence" value="ECO:0007669"/>
    <property type="project" value="UniProtKB-UniRule"/>
</dbReference>
<dbReference type="Gene3D" id="3.30.1130.10">
    <property type="match status" value="1"/>
</dbReference>
<dbReference type="HAMAP" id="MF_00818">
    <property type="entry name" value="QueF_type1"/>
    <property type="match status" value="1"/>
</dbReference>
<dbReference type="InterPro" id="IPR043133">
    <property type="entry name" value="GTP-CH-I_C/QueF"/>
</dbReference>
<dbReference type="InterPro" id="IPR050084">
    <property type="entry name" value="NADPH_dep_7-cyano-7-deazaG_red"/>
</dbReference>
<dbReference type="InterPro" id="IPR029500">
    <property type="entry name" value="QueF"/>
</dbReference>
<dbReference type="InterPro" id="IPR016856">
    <property type="entry name" value="QueF_type1"/>
</dbReference>
<dbReference type="NCBIfam" id="TIGR03139">
    <property type="entry name" value="QueF-II"/>
    <property type="match status" value="1"/>
</dbReference>
<dbReference type="PANTHER" id="PTHR34354">
    <property type="entry name" value="NADPH-DEPENDENT 7-CYANO-7-DEAZAGUANINE REDUCTASE"/>
    <property type="match status" value="1"/>
</dbReference>
<dbReference type="PANTHER" id="PTHR34354:SF1">
    <property type="entry name" value="NADPH-DEPENDENT 7-CYANO-7-DEAZAGUANINE REDUCTASE"/>
    <property type="match status" value="1"/>
</dbReference>
<dbReference type="Pfam" id="PF14489">
    <property type="entry name" value="QueF"/>
    <property type="match status" value="1"/>
</dbReference>
<dbReference type="PIRSF" id="PIRSF027377">
    <property type="entry name" value="Nitrile_oxidored_QueF"/>
    <property type="match status" value="1"/>
</dbReference>
<dbReference type="SUPFAM" id="SSF55620">
    <property type="entry name" value="Tetrahydrobiopterin biosynthesis enzymes-like"/>
    <property type="match status" value="1"/>
</dbReference>
<keyword id="KW-0963">Cytoplasm</keyword>
<keyword id="KW-0521">NADP</keyword>
<keyword id="KW-0560">Oxidoreductase</keyword>
<keyword id="KW-0671">Queuosine biosynthesis</keyword>
<gene>
    <name evidence="1" type="primary">queF</name>
    <name type="ordered locus">str0828</name>
</gene>
<name>QUEF_STRT1</name>
<comment type="function">
    <text evidence="1">Catalyzes the NADPH-dependent reduction of 7-cyano-7-deazaguanine (preQ0) to 7-aminomethyl-7-deazaguanine (preQ1).</text>
</comment>
<comment type="catalytic activity">
    <reaction evidence="1">
        <text>7-aminomethyl-7-carbaguanine + 2 NADP(+) = 7-cyano-7-deazaguanine + 2 NADPH + 3 H(+)</text>
        <dbReference type="Rhea" id="RHEA:13409"/>
        <dbReference type="ChEBI" id="CHEBI:15378"/>
        <dbReference type="ChEBI" id="CHEBI:45075"/>
        <dbReference type="ChEBI" id="CHEBI:57783"/>
        <dbReference type="ChEBI" id="CHEBI:58349"/>
        <dbReference type="ChEBI" id="CHEBI:58703"/>
        <dbReference type="EC" id="1.7.1.13"/>
    </reaction>
</comment>
<comment type="pathway">
    <text evidence="1">tRNA modification; tRNA-queuosine biosynthesis.</text>
</comment>
<comment type="subcellular location">
    <subcellularLocation>
        <location evidence="1">Cytoplasm</location>
    </subcellularLocation>
</comment>
<comment type="similarity">
    <text evidence="1">Belongs to the GTP cyclohydrolase I family. QueF type 1 subfamily.</text>
</comment>
<comment type="sequence caution" evidence="2">
    <conflict type="erroneous initiation">
        <sequence resource="EMBL-CDS" id="AAV62419"/>
    </conflict>
</comment>
<feature type="chain" id="PRO_0000163008" description="NADPH-dependent 7-cyano-7-deazaguanine reductase">
    <location>
        <begin position="1"/>
        <end position="163"/>
    </location>
</feature>
<feature type="active site" description="Thioimide intermediate" evidence="1">
    <location>
        <position position="54"/>
    </location>
</feature>
<feature type="active site" description="Proton donor" evidence="1">
    <location>
        <position position="61"/>
    </location>
</feature>
<feature type="binding site" evidence="1">
    <location>
        <begin position="76"/>
        <end position="78"/>
    </location>
    <ligand>
        <name>substrate</name>
    </ligand>
</feature>
<feature type="binding site" evidence="1">
    <location>
        <begin position="95"/>
        <end position="96"/>
    </location>
    <ligand>
        <name>substrate</name>
    </ligand>
</feature>
<proteinExistence type="inferred from homology"/>
<accession>Q5M061</accession>
<sequence length="163" mass="19223">MSQQEEMKNLTLLGSKETPYIFEYSPQVLESFDNRHADNDYFIKFNCPEFTSLCPITGQPDFASIYISYIPDQLCVESKSLKLYLFSYRNHGDFHENCINTIGKDLVELLNPRYLEVWGKFTPRGGISIDPYYNYGRPKTKYENMAEQRLFNHDLYPENIDNR</sequence>
<evidence type="ECO:0000255" key="1">
    <source>
        <dbReference type="HAMAP-Rule" id="MF_00818"/>
    </source>
</evidence>
<evidence type="ECO:0000305" key="2"/>
<organism>
    <name type="scientific">Streptococcus thermophilus (strain CNRZ 1066)</name>
    <dbReference type="NCBI Taxonomy" id="299768"/>
    <lineage>
        <taxon>Bacteria</taxon>
        <taxon>Bacillati</taxon>
        <taxon>Bacillota</taxon>
        <taxon>Bacilli</taxon>
        <taxon>Lactobacillales</taxon>
        <taxon>Streptococcaceae</taxon>
        <taxon>Streptococcus</taxon>
    </lineage>
</organism>
<reference key="1">
    <citation type="journal article" date="2004" name="Nat. Biotechnol.">
        <title>Complete sequence and comparative genome analysis of the dairy bacterium Streptococcus thermophilus.</title>
        <authorList>
            <person name="Bolotin A."/>
            <person name="Quinquis B."/>
            <person name="Renault P."/>
            <person name="Sorokin A."/>
            <person name="Ehrlich S.D."/>
            <person name="Kulakauskas S."/>
            <person name="Lapidus A."/>
            <person name="Goltsman E."/>
            <person name="Mazur M."/>
            <person name="Pusch G.D."/>
            <person name="Fonstein M."/>
            <person name="Overbeek R."/>
            <person name="Kyprides N."/>
            <person name="Purnelle B."/>
            <person name="Prozzi D."/>
            <person name="Ngui K."/>
            <person name="Masuy D."/>
            <person name="Hancy F."/>
            <person name="Burteau S."/>
            <person name="Boutry M."/>
            <person name="Delcour J."/>
            <person name="Goffeau A."/>
            <person name="Hols P."/>
        </authorList>
    </citation>
    <scope>NUCLEOTIDE SEQUENCE [LARGE SCALE GENOMIC DNA]</scope>
    <source>
        <strain>CNRZ 1066</strain>
    </source>
</reference>
<protein>
    <recommendedName>
        <fullName evidence="1">NADPH-dependent 7-cyano-7-deazaguanine reductase</fullName>
        <ecNumber evidence="1">1.7.1.13</ecNumber>
    </recommendedName>
    <alternativeName>
        <fullName evidence="1">7-cyano-7-carbaguanine reductase</fullName>
    </alternativeName>
    <alternativeName>
        <fullName evidence="1">NADPH-dependent nitrile oxidoreductase</fullName>
    </alternativeName>
    <alternativeName>
        <fullName evidence="1">PreQ(0) reductase</fullName>
    </alternativeName>
</protein>